<gene>
    <name evidence="1" type="primary">vapC42</name>
    <name type="ordered locus">Rv2759c</name>
    <name type="ORF">MTV002.24c</name>
</gene>
<keyword id="KW-0378">Hydrolase</keyword>
<keyword id="KW-0460">Magnesium</keyword>
<keyword id="KW-0479">Metal-binding</keyword>
<keyword id="KW-0540">Nuclease</keyword>
<keyword id="KW-1185">Reference proteome</keyword>
<keyword id="KW-1277">Toxin-antitoxin system</keyword>
<sequence length="131" mass="14372">MIVDTSAIVAIVSGESGAQVLKEALERSPNSRMSAPNYVELCAIMQRRDRPEISRLVDRLLDDYGIQVEAVDADQARVAAQAYRDYGRGSGHPARLNLGDTYSYALAQVTGEPLLFRGDDFTHTDIRPACT</sequence>
<reference key="1">
    <citation type="journal article" date="1998" name="Nature">
        <title>Deciphering the biology of Mycobacterium tuberculosis from the complete genome sequence.</title>
        <authorList>
            <person name="Cole S.T."/>
            <person name="Brosch R."/>
            <person name="Parkhill J."/>
            <person name="Garnier T."/>
            <person name="Churcher C.M."/>
            <person name="Harris D.E."/>
            <person name="Gordon S.V."/>
            <person name="Eiglmeier K."/>
            <person name="Gas S."/>
            <person name="Barry C.E. III"/>
            <person name="Tekaia F."/>
            <person name="Badcock K."/>
            <person name="Basham D."/>
            <person name="Brown D."/>
            <person name="Chillingworth T."/>
            <person name="Connor R."/>
            <person name="Davies R.M."/>
            <person name="Devlin K."/>
            <person name="Feltwell T."/>
            <person name="Gentles S."/>
            <person name="Hamlin N."/>
            <person name="Holroyd S."/>
            <person name="Hornsby T."/>
            <person name="Jagels K."/>
            <person name="Krogh A."/>
            <person name="McLean J."/>
            <person name="Moule S."/>
            <person name="Murphy L.D."/>
            <person name="Oliver S."/>
            <person name="Osborne J."/>
            <person name="Quail M.A."/>
            <person name="Rajandream M.A."/>
            <person name="Rogers J."/>
            <person name="Rutter S."/>
            <person name="Seeger K."/>
            <person name="Skelton S."/>
            <person name="Squares S."/>
            <person name="Squares R."/>
            <person name="Sulston J.E."/>
            <person name="Taylor K."/>
            <person name="Whitehead S."/>
            <person name="Barrell B.G."/>
        </authorList>
    </citation>
    <scope>NUCLEOTIDE SEQUENCE [LARGE SCALE GENOMIC DNA]</scope>
    <source>
        <strain>ATCC 25618 / H37Rv</strain>
    </source>
</reference>
<reference key="2">
    <citation type="journal article" date="2009" name="PLoS Genet.">
        <title>Comprehensive functional analysis of Mycobacterium tuberculosis toxin-antitoxin systems: implications for pathogenesis, stress responses, and evolution.</title>
        <authorList>
            <person name="Ramage H.R."/>
            <person name="Connolly L.E."/>
            <person name="Cox J.S."/>
        </authorList>
    </citation>
    <scope>POSSIBLE FUNCTION</scope>
    <source>
        <strain>ATCC 35801 / TMC 107 / Erdman</strain>
    </source>
</reference>
<reference key="3">
    <citation type="journal article" date="2011" name="Mol. Cell. Proteomics">
        <title>Proteogenomic analysis of Mycobacterium tuberculosis by high resolution mass spectrometry.</title>
        <authorList>
            <person name="Kelkar D.S."/>
            <person name="Kumar D."/>
            <person name="Kumar P."/>
            <person name="Balakrishnan L."/>
            <person name="Muthusamy B."/>
            <person name="Yadav A.K."/>
            <person name="Shrivastava P."/>
            <person name="Marimuthu A."/>
            <person name="Anand S."/>
            <person name="Sundaram H."/>
            <person name="Kingsbury R."/>
            <person name="Harsha H.C."/>
            <person name="Nair B."/>
            <person name="Prasad T.S."/>
            <person name="Chauhan D.S."/>
            <person name="Katoch K."/>
            <person name="Katoch V.M."/>
            <person name="Kumar P."/>
            <person name="Chaerkady R."/>
            <person name="Ramachandran S."/>
            <person name="Dash D."/>
            <person name="Pandey A."/>
        </authorList>
    </citation>
    <scope>IDENTIFICATION BY MASS SPECTROMETRY [LARGE SCALE ANALYSIS]</scope>
    <source>
        <strain>ATCC 25618 / H37Rv</strain>
    </source>
</reference>
<accession>P9WF57</accession>
<accession>L0TD94</accession>
<accession>O33301</accession>
<accession>P67242</accession>
<comment type="function">
    <text evidence="1">Toxic component of a type II toxin-antitoxin (TA) system. An RNase. Its cognate antitoxin is VapB42 (By similarity).</text>
</comment>
<comment type="cofactor">
    <cofactor evidence="1">
        <name>Mg(2+)</name>
        <dbReference type="ChEBI" id="CHEBI:18420"/>
    </cofactor>
</comment>
<comment type="similarity">
    <text evidence="1">Belongs to the PINc/VapC protein family.</text>
</comment>
<feature type="chain" id="PRO_0000221203" description="Ribonuclease VapC42">
    <location>
        <begin position="1"/>
        <end position="131"/>
    </location>
</feature>
<feature type="domain" description="PINc" evidence="1">
    <location>
        <begin position="1"/>
        <end position="125"/>
    </location>
</feature>
<feature type="binding site" evidence="1">
    <location>
        <position position="4"/>
    </location>
    <ligand>
        <name>Mg(2+)</name>
        <dbReference type="ChEBI" id="CHEBI:18420"/>
    </ligand>
</feature>
<feature type="binding site" evidence="1">
    <location>
        <position position="100"/>
    </location>
    <ligand>
        <name>Mg(2+)</name>
        <dbReference type="ChEBI" id="CHEBI:18420"/>
    </ligand>
</feature>
<evidence type="ECO:0000255" key="1">
    <source>
        <dbReference type="HAMAP-Rule" id="MF_00265"/>
    </source>
</evidence>
<name>VPC42_MYCTU</name>
<proteinExistence type="evidence at protein level"/>
<organism>
    <name type="scientific">Mycobacterium tuberculosis (strain ATCC 25618 / H37Rv)</name>
    <dbReference type="NCBI Taxonomy" id="83332"/>
    <lineage>
        <taxon>Bacteria</taxon>
        <taxon>Bacillati</taxon>
        <taxon>Actinomycetota</taxon>
        <taxon>Actinomycetes</taxon>
        <taxon>Mycobacteriales</taxon>
        <taxon>Mycobacteriaceae</taxon>
        <taxon>Mycobacterium</taxon>
        <taxon>Mycobacterium tuberculosis complex</taxon>
    </lineage>
</organism>
<protein>
    <recommendedName>
        <fullName evidence="1">Ribonuclease VapC42</fullName>
        <shortName evidence="1">RNase VapC42</shortName>
        <ecNumber evidence="1">3.1.-.-</ecNumber>
    </recommendedName>
    <alternativeName>
        <fullName evidence="1">Toxin VapC42</fullName>
    </alternativeName>
</protein>
<dbReference type="EC" id="3.1.-.-" evidence="1"/>
<dbReference type="EMBL" id="AL123456">
    <property type="protein sequence ID" value="CCP45558.1"/>
    <property type="molecule type" value="Genomic_DNA"/>
</dbReference>
<dbReference type="PIR" id="F70880">
    <property type="entry name" value="F70880"/>
</dbReference>
<dbReference type="RefSeq" id="NP_217275.1">
    <property type="nucleotide sequence ID" value="NC_000962.3"/>
</dbReference>
<dbReference type="RefSeq" id="WP_003414064.1">
    <property type="nucleotide sequence ID" value="NZ_NVQJ01000020.1"/>
</dbReference>
<dbReference type="SMR" id="P9WF57"/>
<dbReference type="STRING" id="83332.Rv2759c"/>
<dbReference type="PaxDb" id="83332-Rv2759c"/>
<dbReference type="DNASU" id="888293"/>
<dbReference type="GeneID" id="888293"/>
<dbReference type="KEGG" id="mtu:Rv2759c"/>
<dbReference type="KEGG" id="mtv:RVBD_2759c"/>
<dbReference type="TubercuList" id="Rv2759c"/>
<dbReference type="eggNOG" id="COG3742">
    <property type="taxonomic scope" value="Bacteria"/>
</dbReference>
<dbReference type="InParanoid" id="P9WF57"/>
<dbReference type="OrthoDB" id="32625at2"/>
<dbReference type="PhylomeDB" id="P9WF57"/>
<dbReference type="Proteomes" id="UP000001584">
    <property type="component" value="Chromosome"/>
</dbReference>
<dbReference type="GO" id="GO:0000287">
    <property type="term" value="F:magnesium ion binding"/>
    <property type="evidence" value="ECO:0007669"/>
    <property type="project" value="UniProtKB-UniRule"/>
</dbReference>
<dbReference type="GO" id="GO:0004521">
    <property type="term" value="F:RNA endonuclease activity"/>
    <property type="evidence" value="ECO:0000318"/>
    <property type="project" value="GO_Central"/>
</dbReference>
<dbReference type="CDD" id="cd09871">
    <property type="entry name" value="PIN_MtVapC28-VapC30-like"/>
    <property type="match status" value="1"/>
</dbReference>
<dbReference type="Gene3D" id="3.40.50.1010">
    <property type="entry name" value="5'-nuclease"/>
    <property type="match status" value="1"/>
</dbReference>
<dbReference type="HAMAP" id="MF_00265">
    <property type="entry name" value="VapC_Nob1"/>
    <property type="match status" value="1"/>
</dbReference>
<dbReference type="InterPro" id="IPR029060">
    <property type="entry name" value="PIN-like_dom_sf"/>
</dbReference>
<dbReference type="InterPro" id="IPR002716">
    <property type="entry name" value="PIN_dom"/>
</dbReference>
<dbReference type="InterPro" id="IPR050556">
    <property type="entry name" value="Type_II_TA_system_RNase"/>
</dbReference>
<dbReference type="InterPro" id="IPR022907">
    <property type="entry name" value="VapC_family"/>
</dbReference>
<dbReference type="PANTHER" id="PTHR33653">
    <property type="entry name" value="RIBONUCLEASE VAPC2"/>
    <property type="match status" value="1"/>
</dbReference>
<dbReference type="PANTHER" id="PTHR33653:SF1">
    <property type="entry name" value="RIBONUCLEASE VAPC2"/>
    <property type="match status" value="1"/>
</dbReference>
<dbReference type="Pfam" id="PF01850">
    <property type="entry name" value="PIN"/>
    <property type="match status" value="1"/>
</dbReference>
<dbReference type="SUPFAM" id="SSF88723">
    <property type="entry name" value="PIN domain-like"/>
    <property type="match status" value="1"/>
</dbReference>